<keyword id="KW-1185">Reference proteome</keyword>
<proteinExistence type="inferred from homology"/>
<organism>
    <name type="scientific">Desulfitobacterium hafniense (strain Y51)</name>
    <dbReference type="NCBI Taxonomy" id="138119"/>
    <lineage>
        <taxon>Bacteria</taxon>
        <taxon>Bacillati</taxon>
        <taxon>Bacillota</taxon>
        <taxon>Clostridia</taxon>
        <taxon>Eubacteriales</taxon>
        <taxon>Desulfitobacteriaceae</taxon>
        <taxon>Desulfitobacterium</taxon>
    </lineage>
</organism>
<name>Y2926_DESHY</name>
<protein>
    <recommendedName>
        <fullName evidence="1">UPF0342 protein DSY2926</fullName>
    </recommendedName>
</protein>
<evidence type="ECO:0000255" key="1">
    <source>
        <dbReference type="HAMAP-Rule" id="MF_01526"/>
    </source>
</evidence>
<sequence length="124" mass="14545">MSIYETAQQLAQQIKESDEYRDFIVAKELMKADEGHYKMIRDFQMKQFEIQQAQLFQLDISQGKQQELERLYSLLSLNPAAREYLEAEFRISRMINDVQKIIGEAIIDVLPLGFEDNDQPQILA</sequence>
<dbReference type="EMBL" id="AP008230">
    <property type="protein sequence ID" value="BAE84715.1"/>
    <property type="molecule type" value="Genomic_DNA"/>
</dbReference>
<dbReference type="RefSeq" id="WP_011460709.1">
    <property type="nucleotide sequence ID" value="NC_007907.1"/>
</dbReference>
<dbReference type="SMR" id="Q24TC7"/>
<dbReference type="STRING" id="138119.DSY2926"/>
<dbReference type="KEGG" id="dsy:DSY2926"/>
<dbReference type="eggNOG" id="COG3679">
    <property type="taxonomic scope" value="Bacteria"/>
</dbReference>
<dbReference type="HOGENOM" id="CLU_140243_2_0_9"/>
<dbReference type="Proteomes" id="UP000001946">
    <property type="component" value="Chromosome"/>
</dbReference>
<dbReference type="Gene3D" id="1.20.1500.10">
    <property type="entry name" value="YheA/YmcA-like"/>
    <property type="match status" value="1"/>
</dbReference>
<dbReference type="HAMAP" id="MF_01526">
    <property type="entry name" value="UPF0342"/>
    <property type="match status" value="1"/>
</dbReference>
<dbReference type="InterPro" id="IPR010368">
    <property type="entry name" value="Com_YlbF"/>
</dbReference>
<dbReference type="InterPro" id="IPR023378">
    <property type="entry name" value="YheA/YmcA-like_dom_sf"/>
</dbReference>
<dbReference type="Pfam" id="PF06133">
    <property type="entry name" value="Com_YlbF"/>
    <property type="match status" value="1"/>
</dbReference>
<dbReference type="SUPFAM" id="SSF158622">
    <property type="entry name" value="YheA/YmcA-like"/>
    <property type="match status" value="1"/>
</dbReference>
<reference key="1">
    <citation type="journal article" date="2006" name="J. Bacteriol.">
        <title>Complete genome sequence of the dehalorespiring bacterium Desulfitobacterium hafniense Y51 and comparison with Dehalococcoides ethenogenes 195.</title>
        <authorList>
            <person name="Nonaka H."/>
            <person name="Keresztes G."/>
            <person name="Shinoda Y."/>
            <person name="Ikenaga Y."/>
            <person name="Abe M."/>
            <person name="Naito K."/>
            <person name="Inatomi K."/>
            <person name="Furukawa K."/>
            <person name="Inui M."/>
            <person name="Yukawa H."/>
        </authorList>
    </citation>
    <scope>NUCLEOTIDE SEQUENCE [LARGE SCALE GENOMIC DNA]</scope>
    <source>
        <strain>Y51</strain>
    </source>
</reference>
<feature type="chain" id="PRO_0000296972" description="UPF0342 protein DSY2926">
    <location>
        <begin position="1"/>
        <end position="124"/>
    </location>
</feature>
<gene>
    <name type="ordered locus">DSY2926</name>
</gene>
<accession>Q24TC7</accession>
<comment type="similarity">
    <text evidence="1">Belongs to the UPF0342 family.</text>
</comment>